<name>FCNV2_CERRY</name>
<dbReference type="EMBL" id="GU065324">
    <property type="protein sequence ID" value="ADJ51063.1"/>
    <property type="molecule type" value="mRNA"/>
</dbReference>
<dbReference type="SMR" id="D8VNS8"/>
<dbReference type="GO" id="GO:0005615">
    <property type="term" value="C:extracellular space"/>
    <property type="evidence" value="ECO:0007669"/>
    <property type="project" value="TreeGrafter"/>
</dbReference>
<dbReference type="GO" id="GO:0003823">
    <property type="term" value="F:antigen binding"/>
    <property type="evidence" value="ECO:0007669"/>
    <property type="project" value="TreeGrafter"/>
</dbReference>
<dbReference type="GO" id="GO:0097367">
    <property type="term" value="F:carbohydrate derivative binding"/>
    <property type="evidence" value="ECO:0007669"/>
    <property type="project" value="TreeGrafter"/>
</dbReference>
<dbReference type="GO" id="GO:0005102">
    <property type="term" value="F:signaling receptor binding"/>
    <property type="evidence" value="ECO:0007669"/>
    <property type="project" value="TreeGrafter"/>
</dbReference>
<dbReference type="GO" id="GO:0090729">
    <property type="term" value="F:toxin activity"/>
    <property type="evidence" value="ECO:0007669"/>
    <property type="project" value="UniProtKB-KW"/>
</dbReference>
<dbReference type="GO" id="GO:0001867">
    <property type="term" value="P:complement activation, lectin pathway"/>
    <property type="evidence" value="ECO:0007669"/>
    <property type="project" value="TreeGrafter"/>
</dbReference>
<dbReference type="CDD" id="cd00087">
    <property type="entry name" value="FReD"/>
    <property type="match status" value="1"/>
</dbReference>
<dbReference type="FunFam" id="3.90.215.10:FF:000001">
    <property type="entry name" value="Tenascin isoform 1"/>
    <property type="match status" value="1"/>
</dbReference>
<dbReference type="Gene3D" id="3.90.215.10">
    <property type="entry name" value="Gamma Fibrinogen, chain A, domain 1"/>
    <property type="match status" value="1"/>
</dbReference>
<dbReference type="InterPro" id="IPR008160">
    <property type="entry name" value="Collagen"/>
</dbReference>
<dbReference type="InterPro" id="IPR036056">
    <property type="entry name" value="Fibrinogen-like_C"/>
</dbReference>
<dbReference type="InterPro" id="IPR014716">
    <property type="entry name" value="Fibrinogen_a/b/g_C_1"/>
</dbReference>
<dbReference type="InterPro" id="IPR002181">
    <property type="entry name" value="Fibrinogen_a/b/g_C_dom"/>
</dbReference>
<dbReference type="InterPro" id="IPR050373">
    <property type="entry name" value="Fibrinogen_C-term_domain"/>
</dbReference>
<dbReference type="InterPro" id="IPR020837">
    <property type="entry name" value="Fibrinogen_CS"/>
</dbReference>
<dbReference type="NCBIfam" id="NF040941">
    <property type="entry name" value="GGGWT_bact"/>
    <property type="match status" value="1"/>
</dbReference>
<dbReference type="PANTHER" id="PTHR19143">
    <property type="entry name" value="FIBRINOGEN/TENASCIN/ANGIOPOEITIN"/>
    <property type="match status" value="1"/>
</dbReference>
<dbReference type="PANTHER" id="PTHR19143:SF415">
    <property type="entry name" value="FICOLIN-3"/>
    <property type="match status" value="1"/>
</dbReference>
<dbReference type="Pfam" id="PF01391">
    <property type="entry name" value="Collagen"/>
    <property type="match status" value="1"/>
</dbReference>
<dbReference type="Pfam" id="PF00147">
    <property type="entry name" value="Fibrinogen_C"/>
    <property type="match status" value="1"/>
</dbReference>
<dbReference type="SMART" id="SM00186">
    <property type="entry name" value="FBG"/>
    <property type="match status" value="1"/>
</dbReference>
<dbReference type="SUPFAM" id="SSF56496">
    <property type="entry name" value="Fibrinogen C-terminal domain-like"/>
    <property type="match status" value="1"/>
</dbReference>
<dbReference type="PROSITE" id="PS00514">
    <property type="entry name" value="FIBRINOGEN_C_1"/>
    <property type="match status" value="1"/>
</dbReference>
<dbReference type="PROSITE" id="PS51406">
    <property type="entry name" value="FIBRINOGEN_C_2"/>
    <property type="match status" value="1"/>
</dbReference>
<proteinExistence type="evidence at protein level"/>
<sequence length="347" mass="38681">MKPWAAFHLIFLVASSLEGEVSNYGTRGAQDTEPTCRTEHQCTRDKIILQSQPGIPGIPGVPGINGSEGLKGDPGPQGLPGETGFDGIPGVAGPKGDKGDQGDKGDKGDKGDKGDACILDDCPPTDVEVRNCQDLLEHGEILNGWYTIYPTKENPMVVFCDMETDGGGWLVFQRRQDGSVDFYLDWESYKKGFGKQESEFWLGNDKIHLLTSSGTQQLRIDLEDFEGSRTFAKYSSFSIGDENEKYRLIVGSYLDGSMNDSFRIHNGHSFSTKDRDNDTNKGNCAMMYKGAWWYFHCHHANLNGLYYKGKHANYADGINWRSGKGYYYSYKYADMKIRPQQSETTVS</sequence>
<protein>
    <recommendedName>
        <fullName>Ryncolin-2</fullName>
    </recommendedName>
</protein>
<organism>
    <name type="scientific">Cerberus rynchops</name>
    <name type="common">Dog-faced water snake</name>
    <dbReference type="NCBI Taxonomy" id="46267"/>
    <lineage>
        <taxon>Eukaryota</taxon>
        <taxon>Metazoa</taxon>
        <taxon>Chordata</taxon>
        <taxon>Craniata</taxon>
        <taxon>Vertebrata</taxon>
        <taxon>Euteleostomi</taxon>
        <taxon>Lepidosauria</taxon>
        <taxon>Squamata</taxon>
        <taxon>Bifurcata</taxon>
        <taxon>Unidentata</taxon>
        <taxon>Episquamata</taxon>
        <taxon>Toxicofera</taxon>
        <taxon>Serpentes</taxon>
        <taxon>Colubroidea</taxon>
        <taxon>Homalopsidae</taxon>
        <taxon>Cerberus</taxon>
    </lineage>
</organism>
<evidence type="ECO:0000250" key="1"/>
<evidence type="ECO:0000255" key="2"/>
<evidence type="ECO:0000255" key="3">
    <source>
        <dbReference type="PROSITE-ProRule" id="PRU00739"/>
    </source>
</evidence>
<evidence type="ECO:0000256" key="4">
    <source>
        <dbReference type="SAM" id="MobiDB-lite"/>
    </source>
</evidence>
<evidence type="ECO:0000269" key="5">
    <source>
    </source>
</evidence>
<evidence type="ECO:0000305" key="6"/>
<reference key="1">
    <citation type="journal article" date="2010" name="J. Proteome Res.">
        <title>Identification of a novel family of snake venom proteins Veficolins from Cerberus rynchops using a venom gland transcriptomics and proteomics approach.</title>
        <authorList>
            <person name="Ompraba G."/>
            <person name="Chapeaurouge A."/>
            <person name="Doley R."/>
            <person name="Devi K.R."/>
            <person name="Padmanaban P."/>
            <person name="Venkatraman C."/>
            <person name="Velmurugan D."/>
            <person name="Lin Q."/>
            <person name="Kini R.M."/>
        </authorList>
    </citation>
    <scope>NUCLEOTIDE SEQUENCE [MRNA]</scope>
    <scope>IDENTIFICATION BY MASS SPECTROMETRY</scope>
    <scope>HYDROXYLATION</scope>
    <source>
        <tissue>Venom</tissue>
        <tissue>Venom gland</tissue>
    </source>
</reference>
<keyword id="KW-1216">Complement system impairing toxin</keyword>
<keyword id="KW-1015">Disulfide bond</keyword>
<keyword id="KW-1199">Hemostasis impairing toxin</keyword>
<keyword id="KW-0379">Hydroxylation</keyword>
<keyword id="KW-0964">Secreted</keyword>
<keyword id="KW-0732">Signal</keyword>
<keyword id="KW-0800">Toxin</keyword>
<accession>D8VNS8</accession>
<comment type="function">
    <text evidence="1">Initiates complement activation and/or interferes in platelet aggregation and/or blood coagulation.</text>
</comment>
<comment type="subcellular location">
    <subcellularLocation>
        <location>Secreted</location>
    </subcellularLocation>
</comment>
<comment type="tissue specificity">
    <text>Expressed by the venom duct.</text>
</comment>
<comment type="PTM">
    <text evidence="5">Hydroxylated, possibly at Pro-74 and Pro-94.</text>
</comment>
<comment type="similarity">
    <text evidence="6">Belongs to the ficolin lectin family. Veficolin subfamily.</text>
</comment>
<feature type="signal peptide" evidence="2">
    <location>
        <begin position="1"/>
        <end position="19"/>
    </location>
</feature>
<feature type="chain" id="PRO_0000414919" description="Ryncolin-2">
    <location>
        <begin position="20"/>
        <end position="347"/>
    </location>
</feature>
<feature type="domain" description="Collagen-like">
    <location>
        <begin position="57"/>
        <end position="114"/>
    </location>
</feature>
<feature type="domain" description="Fibrinogen C-terminal" evidence="3">
    <location>
        <begin position="121"/>
        <end position="341"/>
    </location>
</feature>
<feature type="region of interest" description="Disordered" evidence="4">
    <location>
        <begin position="49"/>
        <end position="115"/>
    </location>
</feature>
<feature type="compositionally biased region" description="Basic and acidic residues" evidence="4">
    <location>
        <begin position="95"/>
        <end position="115"/>
    </location>
</feature>
<feature type="disulfide bond" evidence="3">
    <location>
        <begin position="132"/>
        <end position="160"/>
    </location>
</feature>
<feature type="disulfide bond" evidence="3">
    <location>
        <begin position="284"/>
        <end position="297"/>
    </location>
</feature>